<evidence type="ECO:0000255" key="1">
    <source>
        <dbReference type="HAMAP-Rule" id="MF_00049"/>
    </source>
</evidence>
<name>SYL_POLAQ</name>
<comment type="catalytic activity">
    <reaction evidence="1">
        <text>tRNA(Leu) + L-leucine + ATP = L-leucyl-tRNA(Leu) + AMP + diphosphate</text>
        <dbReference type="Rhea" id="RHEA:11688"/>
        <dbReference type="Rhea" id="RHEA-COMP:9613"/>
        <dbReference type="Rhea" id="RHEA-COMP:9622"/>
        <dbReference type="ChEBI" id="CHEBI:30616"/>
        <dbReference type="ChEBI" id="CHEBI:33019"/>
        <dbReference type="ChEBI" id="CHEBI:57427"/>
        <dbReference type="ChEBI" id="CHEBI:78442"/>
        <dbReference type="ChEBI" id="CHEBI:78494"/>
        <dbReference type="ChEBI" id="CHEBI:456215"/>
        <dbReference type="EC" id="6.1.1.4"/>
    </reaction>
</comment>
<comment type="subcellular location">
    <subcellularLocation>
        <location evidence="1">Cytoplasm</location>
    </subcellularLocation>
</comment>
<comment type="similarity">
    <text evidence="1">Belongs to the class-I aminoacyl-tRNA synthetase family.</text>
</comment>
<sequence length="890" mass="99554">MSKDYDHRGIEAAAQADWERTQVYRVTENAVNASGKKKPKYYACSMLPYPSGKLHMGHVRNYTINDVMARQLRMQGYNVLMPMGWDAFGMPAENAAIQNKVPPAKWTYDNIAYMKKQMAAMGLAIDWSREVATCSPDYYRWNQWLFLKMLEKGVAYRKTQVVNWDPIDQTVLANEQVIDGRGWRSGALVEKREIPGYYFNITAYAEQLLSGLDGLGWPERVKTMQQNWIGKSRGVRFAFKHEIADAHGNFIQDGLLYVFTTRADTIMGVTFCAVAAEHPLASKAAENNPTLAAFIEKCKTGSVIEADLATQEKEGMFTGLYVTHPLTNESVPVWVGNYVLMSYGDGAVMGVPAHDERDFAFALKYELPIKQVIALKDESPMFNGTHWQDWYAQKENVVCFNSGKFDGLSHEEAVNTVASDLEKMGIGELKTTYRLRDWGISRQRYWGTPIPIIHCGDEGNPGCGAVPVPEADLPVVLPEDCVPDGSGNPLNKRADFLNVKCPQCGKPARRETDTMDTFVDSSWYFMRYTGPDATSMVDGRNEYWMPMDQYIGGIEHAILHLLYARFWTKVMRDLDLITFDEPFQNLLTQGMVLNETYYSEEASGKKTWLNPLDVELDLDEKGRPQGAKLKGDSSGTPVIIGGVEKMSKSKNNGVDPQALIDQYGADTARLFVMFAAPPEQQLEWSGAGVDGASRFLRRVWMYSSSQASAIKDAQDALPSTLNDAEKELRREVHAILKQANFDYQRRQYNTVVSAAMKMLNVLEPIKLGQDSPISASVLRECLSILLRVLYPVVPHLTHVLWKDMGYSENFGSLLDAPWPTVDETALIQTEITLMLQINGKLRGELKVPADASKEQIEAIALQSEPATKALNGGAPKKVIVVPGRLINIVA</sequence>
<organism>
    <name type="scientific">Polynucleobacter asymbioticus (strain DSM 18221 / CIP 109841 / QLW-P1DMWA-1)</name>
    <name type="common">Polynucleobacter necessarius subsp. asymbioticus</name>
    <dbReference type="NCBI Taxonomy" id="312153"/>
    <lineage>
        <taxon>Bacteria</taxon>
        <taxon>Pseudomonadati</taxon>
        <taxon>Pseudomonadota</taxon>
        <taxon>Betaproteobacteria</taxon>
        <taxon>Burkholderiales</taxon>
        <taxon>Burkholderiaceae</taxon>
        <taxon>Polynucleobacter</taxon>
    </lineage>
</organism>
<gene>
    <name evidence="1" type="primary">leuS</name>
    <name type="ordered locus">Pnuc_0232</name>
</gene>
<accession>A4SVD9</accession>
<feature type="chain" id="PRO_1000074838" description="Leucine--tRNA ligase">
    <location>
        <begin position="1"/>
        <end position="890"/>
    </location>
</feature>
<feature type="short sequence motif" description="'HIGH' region">
    <location>
        <begin position="48"/>
        <end position="58"/>
    </location>
</feature>
<feature type="short sequence motif" description="'KMSKS' region">
    <location>
        <begin position="645"/>
        <end position="649"/>
    </location>
</feature>
<feature type="binding site" evidence="1">
    <location>
        <position position="648"/>
    </location>
    <ligand>
        <name>ATP</name>
        <dbReference type="ChEBI" id="CHEBI:30616"/>
    </ligand>
</feature>
<dbReference type="EC" id="6.1.1.4" evidence="1"/>
<dbReference type="EMBL" id="CP000655">
    <property type="protein sequence ID" value="ABP33453.1"/>
    <property type="molecule type" value="Genomic_DNA"/>
</dbReference>
<dbReference type="RefSeq" id="WP_011902078.1">
    <property type="nucleotide sequence ID" value="NC_009379.1"/>
</dbReference>
<dbReference type="SMR" id="A4SVD9"/>
<dbReference type="GeneID" id="31480582"/>
<dbReference type="KEGG" id="pnu:Pnuc_0232"/>
<dbReference type="eggNOG" id="COG0495">
    <property type="taxonomic scope" value="Bacteria"/>
</dbReference>
<dbReference type="HOGENOM" id="CLU_004427_0_0_4"/>
<dbReference type="Proteomes" id="UP000000231">
    <property type="component" value="Chromosome"/>
</dbReference>
<dbReference type="GO" id="GO:0005829">
    <property type="term" value="C:cytosol"/>
    <property type="evidence" value="ECO:0007669"/>
    <property type="project" value="TreeGrafter"/>
</dbReference>
<dbReference type="GO" id="GO:0002161">
    <property type="term" value="F:aminoacyl-tRNA deacylase activity"/>
    <property type="evidence" value="ECO:0007669"/>
    <property type="project" value="InterPro"/>
</dbReference>
<dbReference type="GO" id="GO:0005524">
    <property type="term" value="F:ATP binding"/>
    <property type="evidence" value="ECO:0007669"/>
    <property type="project" value="UniProtKB-UniRule"/>
</dbReference>
<dbReference type="GO" id="GO:0004823">
    <property type="term" value="F:leucine-tRNA ligase activity"/>
    <property type="evidence" value="ECO:0007669"/>
    <property type="project" value="UniProtKB-UniRule"/>
</dbReference>
<dbReference type="GO" id="GO:0006429">
    <property type="term" value="P:leucyl-tRNA aminoacylation"/>
    <property type="evidence" value="ECO:0007669"/>
    <property type="project" value="UniProtKB-UniRule"/>
</dbReference>
<dbReference type="CDD" id="cd07958">
    <property type="entry name" value="Anticodon_Ia_Leu_BEm"/>
    <property type="match status" value="1"/>
</dbReference>
<dbReference type="CDD" id="cd00812">
    <property type="entry name" value="LeuRS_core"/>
    <property type="match status" value="1"/>
</dbReference>
<dbReference type="FunFam" id="1.10.730.10:FF:000002">
    <property type="entry name" value="Leucine--tRNA ligase"/>
    <property type="match status" value="1"/>
</dbReference>
<dbReference type="FunFam" id="2.20.28.290:FF:000001">
    <property type="entry name" value="Leucine--tRNA ligase"/>
    <property type="match status" value="1"/>
</dbReference>
<dbReference type="FunFam" id="3.10.20.590:FF:000001">
    <property type="entry name" value="Leucine--tRNA ligase"/>
    <property type="match status" value="1"/>
</dbReference>
<dbReference type="FunFam" id="3.40.50.620:FF:000003">
    <property type="entry name" value="Leucine--tRNA ligase"/>
    <property type="match status" value="1"/>
</dbReference>
<dbReference type="FunFam" id="3.40.50.620:FF:000056">
    <property type="entry name" value="Leucine--tRNA ligase"/>
    <property type="match status" value="1"/>
</dbReference>
<dbReference type="FunFam" id="3.90.740.10:FF:000012">
    <property type="entry name" value="Leucine--tRNA ligase"/>
    <property type="match status" value="1"/>
</dbReference>
<dbReference type="Gene3D" id="2.20.28.290">
    <property type="match status" value="1"/>
</dbReference>
<dbReference type="Gene3D" id="3.10.20.590">
    <property type="match status" value="1"/>
</dbReference>
<dbReference type="Gene3D" id="3.40.50.620">
    <property type="entry name" value="HUPs"/>
    <property type="match status" value="2"/>
</dbReference>
<dbReference type="Gene3D" id="1.10.730.10">
    <property type="entry name" value="Isoleucyl-tRNA Synthetase, Domain 1"/>
    <property type="match status" value="1"/>
</dbReference>
<dbReference type="Gene3D" id="3.90.740.10">
    <property type="entry name" value="Valyl/Leucyl/Isoleucyl-tRNA synthetase, editing domain"/>
    <property type="match status" value="1"/>
</dbReference>
<dbReference type="HAMAP" id="MF_00049_B">
    <property type="entry name" value="Leu_tRNA_synth_B"/>
    <property type="match status" value="1"/>
</dbReference>
<dbReference type="InterPro" id="IPR001412">
    <property type="entry name" value="aa-tRNA-synth_I_CS"/>
</dbReference>
<dbReference type="InterPro" id="IPR002300">
    <property type="entry name" value="aa-tRNA-synth_Ia"/>
</dbReference>
<dbReference type="InterPro" id="IPR002302">
    <property type="entry name" value="Leu-tRNA-ligase"/>
</dbReference>
<dbReference type="InterPro" id="IPR025709">
    <property type="entry name" value="Leu_tRNA-synth_edit"/>
</dbReference>
<dbReference type="InterPro" id="IPR013155">
    <property type="entry name" value="M/V/L/I-tRNA-synth_anticd-bd"/>
</dbReference>
<dbReference type="InterPro" id="IPR015413">
    <property type="entry name" value="Methionyl/Leucyl_tRNA_Synth"/>
</dbReference>
<dbReference type="InterPro" id="IPR014729">
    <property type="entry name" value="Rossmann-like_a/b/a_fold"/>
</dbReference>
<dbReference type="InterPro" id="IPR009080">
    <property type="entry name" value="tRNAsynth_Ia_anticodon-bd"/>
</dbReference>
<dbReference type="InterPro" id="IPR009008">
    <property type="entry name" value="Val/Leu/Ile-tRNA-synth_edit"/>
</dbReference>
<dbReference type="NCBIfam" id="TIGR00396">
    <property type="entry name" value="leuS_bact"/>
    <property type="match status" value="1"/>
</dbReference>
<dbReference type="PANTHER" id="PTHR43740:SF2">
    <property type="entry name" value="LEUCINE--TRNA LIGASE, MITOCHONDRIAL"/>
    <property type="match status" value="1"/>
</dbReference>
<dbReference type="PANTHER" id="PTHR43740">
    <property type="entry name" value="LEUCYL-TRNA SYNTHETASE"/>
    <property type="match status" value="1"/>
</dbReference>
<dbReference type="Pfam" id="PF08264">
    <property type="entry name" value="Anticodon_1"/>
    <property type="match status" value="1"/>
</dbReference>
<dbReference type="Pfam" id="PF00133">
    <property type="entry name" value="tRNA-synt_1"/>
    <property type="match status" value="1"/>
</dbReference>
<dbReference type="Pfam" id="PF13603">
    <property type="entry name" value="tRNA-synt_1_2"/>
    <property type="match status" value="1"/>
</dbReference>
<dbReference type="Pfam" id="PF09334">
    <property type="entry name" value="tRNA-synt_1g"/>
    <property type="match status" value="1"/>
</dbReference>
<dbReference type="PRINTS" id="PR00985">
    <property type="entry name" value="TRNASYNTHLEU"/>
</dbReference>
<dbReference type="SUPFAM" id="SSF47323">
    <property type="entry name" value="Anticodon-binding domain of a subclass of class I aminoacyl-tRNA synthetases"/>
    <property type="match status" value="1"/>
</dbReference>
<dbReference type="SUPFAM" id="SSF52374">
    <property type="entry name" value="Nucleotidylyl transferase"/>
    <property type="match status" value="1"/>
</dbReference>
<dbReference type="SUPFAM" id="SSF50677">
    <property type="entry name" value="ValRS/IleRS/LeuRS editing domain"/>
    <property type="match status" value="1"/>
</dbReference>
<dbReference type="PROSITE" id="PS00178">
    <property type="entry name" value="AA_TRNA_LIGASE_I"/>
    <property type="match status" value="1"/>
</dbReference>
<proteinExistence type="inferred from homology"/>
<reference key="1">
    <citation type="journal article" date="2012" name="Stand. Genomic Sci.">
        <title>Complete genome sequence of Polynucleobacter necessarius subsp. asymbioticus type strain (QLW-P1DMWA-1(T)).</title>
        <authorList>
            <person name="Meincke L."/>
            <person name="Copeland A."/>
            <person name="Lapidus A."/>
            <person name="Lucas S."/>
            <person name="Berry K.W."/>
            <person name="Del Rio T.G."/>
            <person name="Hammon N."/>
            <person name="Dalin E."/>
            <person name="Tice H."/>
            <person name="Pitluck S."/>
            <person name="Richardson P."/>
            <person name="Bruce D."/>
            <person name="Goodwin L."/>
            <person name="Han C."/>
            <person name="Tapia R."/>
            <person name="Detter J.C."/>
            <person name="Schmutz J."/>
            <person name="Brettin T."/>
            <person name="Larimer F."/>
            <person name="Land M."/>
            <person name="Hauser L."/>
            <person name="Kyrpides N.C."/>
            <person name="Ivanova N."/>
            <person name="Goker M."/>
            <person name="Woyke T."/>
            <person name="Wu Q.L."/>
            <person name="Pockl M."/>
            <person name="Hahn M.W."/>
            <person name="Klenk H.P."/>
        </authorList>
    </citation>
    <scope>NUCLEOTIDE SEQUENCE [LARGE SCALE GENOMIC DNA]</scope>
    <source>
        <strain>DSM 18221 / CIP 109841 / QLW-P1DMWA-1</strain>
    </source>
</reference>
<keyword id="KW-0030">Aminoacyl-tRNA synthetase</keyword>
<keyword id="KW-0067">ATP-binding</keyword>
<keyword id="KW-0963">Cytoplasm</keyword>
<keyword id="KW-0436">Ligase</keyword>
<keyword id="KW-0547">Nucleotide-binding</keyword>
<keyword id="KW-0648">Protein biosynthesis</keyword>
<keyword id="KW-1185">Reference proteome</keyword>
<protein>
    <recommendedName>
        <fullName evidence="1">Leucine--tRNA ligase</fullName>
        <ecNumber evidence="1">6.1.1.4</ecNumber>
    </recommendedName>
    <alternativeName>
        <fullName evidence="1">Leucyl-tRNA synthetase</fullName>
        <shortName evidence="1">LeuRS</shortName>
    </alternativeName>
</protein>